<protein>
    <recommendedName>
        <fullName evidence="1">Small ribosomal subunit protein uS5</fullName>
    </recommendedName>
    <alternativeName>
        <fullName evidence="2">30S ribosomal protein S5</fullName>
    </alternativeName>
</protein>
<sequence>MAKVEQNEGLVEKLVAVDRVAKVVKGGRIFSFTALTVVGDGNGRVGFGRGKAREVPAAISKALEAARRNMITVDLAGTTLQHPVNARHGASRVYMQPASEGTGVIAGGAMRAVLEAAGVHNVLAKCYGSTNAANVVNATFKGLRDMTSPEKVAAKRGKSVEEIQG</sequence>
<proteinExistence type="inferred from homology"/>
<comment type="function">
    <text evidence="1">With S4 and S12 plays an important role in translational accuracy.</text>
</comment>
<comment type="function">
    <text evidence="1">Located at the back of the 30S subunit body where it stabilizes the conformation of the head with respect to the body.</text>
</comment>
<comment type="subunit">
    <text evidence="1">Part of the 30S ribosomal subunit. Contacts proteins S4 and S8.</text>
</comment>
<comment type="domain">
    <text>The N-terminal domain interacts with the head of the 30S subunit; the C-terminal domain interacts with the body and contacts protein S4. The interaction surface between S4 and S5 is involved in control of translational fidelity.</text>
</comment>
<comment type="similarity">
    <text evidence="1">Belongs to the universal ribosomal protein uS5 family.</text>
</comment>
<gene>
    <name evidence="1" type="primary">rpsE</name>
    <name type="ordered locus">ACICU_03261</name>
</gene>
<feature type="chain" id="PRO_1000140828" description="Small ribosomal subunit protein uS5">
    <location>
        <begin position="1"/>
        <end position="165"/>
    </location>
</feature>
<feature type="domain" description="S5 DRBM" evidence="1">
    <location>
        <begin position="10"/>
        <end position="73"/>
    </location>
</feature>
<accession>B2HZ91</accession>
<reference key="1">
    <citation type="journal article" date="2008" name="Antimicrob. Agents Chemother.">
        <title>Whole-genome pyrosequencing of an epidemic multidrug-resistant Acinetobacter baumannii strain belonging to the European clone II group.</title>
        <authorList>
            <person name="Iacono M."/>
            <person name="Villa L."/>
            <person name="Fortini D."/>
            <person name="Bordoni R."/>
            <person name="Imperi F."/>
            <person name="Bonnal R.J."/>
            <person name="Sicheritz-Ponten T."/>
            <person name="De Bellis G."/>
            <person name="Visca P."/>
            <person name="Cassone A."/>
            <person name="Carattoli A."/>
        </authorList>
    </citation>
    <scope>NUCLEOTIDE SEQUENCE [LARGE SCALE GENOMIC DNA]</scope>
    <source>
        <strain>ACICU</strain>
    </source>
</reference>
<organism>
    <name type="scientific">Acinetobacter baumannii (strain ACICU)</name>
    <dbReference type="NCBI Taxonomy" id="405416"/>
    <lineage>
        <taxon>Bacteria</taxon>
        <taxon>Pseudomonadati</taxon>
        <taxon>Pseudomonadota</taxon>
        <taxon>Gammaproteobacteria</taxon>
        <taxon>Moraxellales</taxon>
        <taxon>Moraxellaceae</taxon>
        <taxon>Acinetobacter</taxon>
        <taxon>Acinetobacter calcoaceticus/baumannii complex</taxon>
    </lineage>
</organism>
<dbReference type="EMBL" id="CP000863">
    <property type="protein sequence ID" value="ACC58573.1"/>
    <property type="molecule type" value="Genomic_DNA"/>
</dbReference>
<dbReference type="RefSeq" id="WP_001141025.1">
    <property type="nucleotide sequence ID" value="NZ_CP031380.1"/>
</dbReference>
<dbReference type="SMR" id="B2HZ91"/>
<dbReference type="GeneID" id="92895300"/>
<dbReference type="KEGG" id="abc:ACICU_03261"/>
<dbReference type="HOGENOM" id="CLU_065898_2_2_6"/>
<dbReference type="Proteomes" id="UP000008839">
    <property type="component" value="Chromosome"/>
</dbReference>
<dbReference type="GO" id="GO:0015935">
    <property type="term" value="C:small ribosomal subunit"/>
    <property type="evidence" value="ECO:0007669"/>
    <property type="project" value="InterPro"/>
</dbReference>
<dbReference type="GO" id="GO:0019843">
    <property type="term" value="F:rRNA binding"/>
    <property type="evidence" value="ECO:0007669"/>
    <property type="project" value="UniProtKB-UniRule"/>
</dbReference>
<dbReference type="GO" id="GO:0003735">
    <property type="term" value="F:structural constituent of ribosome"/>
    <property type="evidence" value="ECO:0007669"/>
    <property type="project" value="InterPro"/>
</dbReference>
<dbReference type="GO" id="GO:0006412">
    <property type="term" value="P:translation"/>
    <property type="evidence" value="ECO:0007669"/>
    <property type="project" value="UniProtKB-UniRule"/>
</dbReference>
<dbReference type="FunFam" id="3.30.160.20:FF:000001">
    <property type="entry name" value="30S ribosomal protein S5"/>
    <property type="match status" value="1"/>
</dbReference>
<dbReference type="FunFam" id="3.30.230.10:FF:000002">
    <property type="entry name" value="30S ribosomal protein S5"/>
    <property type="match status" value="1"/>
</dbReference>
<dbReference type="Gene3D" id="3.30.160.20">
    <property type="match status" value="1"/>
</dbReference>
<dbReference type="Gene3D" id="3.30.230.10">
    <property type="match status" value="1"/>
</dbReference>
<dbReference type="HAMAP" id="MF_01307_B">
    <property type="entry name" value="Ribosomal_uS5_B"/>
    <property type="match status" value="1"/>
</dbReference>
<dbReference type="InterPro" id="IPR020568">
    <property type="entry name" value="Ribosomal_Su5_D2-typ_SF"/>
</dbReference>
<dbReference type="InterPro" id="IPR000851">
    <property type="entry name" value="Ribosomal_uS5"/>
</dbReference>
<dbReference type="InterPro" id="IPR005712">
    <property type="entry name" value="Ribosomal_uS5_bac-type"/>
</dbReference>
<dbReference type="InterPro" id="IPR005324">
    <property type="entry name" value="Ribosomal_uS5_C"/>
</dbReference>
<dbReference type="InterPro" id="IPR013810">
    <property type="entry name" value="Ribosomal_uS5_N"/>
</dbReference>
<dbReference type="InterPro" id="IPR018192">
    <property type="entry name" value="Ribosomal_uS5_N_CS"/>
</dbReference>
<dbReference type="InterPro" id="IPR014721">
    <property type="entry name" value="Ribsml_uS5_D2-typ_fold_subgr"/>
</dbReference>
<dbReference type="NCBIfam" id="TIGR01021">
    <property type="entry name" value="rpsE_bact"/>
    <property type="match status" value="1"/>
</dbReference>
<dbReference type="PANTHER" id="PTHR48277">
    <property type="entry name" value="MITOCHONDRIAL RIBOSOMAL PROTEIN S5"/>
    <property type="match status" value="1"/>
</dbReference>
<dbReference type="PANTHER" id="PTHR48277:SF1">
    <property type="entry name" value="MITOCHONDRIAL RIBOSOMAL PROTEIN S5"/>
    <property type="match status" value="1"/>
</dbReference>
<dbReference type="Pfam" id="PF00333">
    <property type="entry name" value="Ribosomal_S5"/>
    <property type="match status" value="1"/>
</dbReference>
<dbReference type="Pfam" id="PF03719">
    <property type="entry name" value="Ribosomal_S5_C"/>
    <property type="match status" value="1"/>
</dbReference>
<dbReference type="SUPFAM" id="SSF54768">
    <property type="entry name" value="dsRNA-binding domain-like"/>
    <property type="match status" value="1"/>
</dbReference>
<dbReference type="SUPFAM" id="SSF54211">
    <property type="entry name" value="Ribosomal protein S5 domain 2-like"/>
    <property type="match status" value="1"/>
</dbReference>
<dbReference type="PROSITE" id="PS00585">
    <property type="entry name" value="RIBOSOMAL_S5"/>
    <property type="match status" value="1"/>
</dbReference>
<dbReference type="PROSITE" id="PS50881">
    <property type="entry name" value="S5_DSRBD"/>
    <property type="match status" value="1"/>
</dbReference>
<keyword id="KW-0687">Ribonucleoprotein</keyword>
<keyword id="KW-0689">Ribosomal protein</keyword>
<keyword id="KW-0694">RNA-binding</keyword>
<keyword id="KW-0699">rRNA-binding</keyword>
<evidence type="ECO:0000255" key="1">
    <source>
        <dbReference type="HAMAP-Rule" id="MF_01307"/>
    </source>
</evidence>
<evidence type="ECO:0000305" key="2"/>
<name>RS5_ACIBC</name>